<gene>
    <name evidence="1" type="primary">ubiD</name>
    <name type="ordered locus">Shew185_3859</name>
</gene>
<protein>
    <recommendedName>
        <fullName evidence="1">3-octaprenyl-4-hydroxybenzoate carboxy-lyase</fullName>
        <ecNumber evidence="1">4.1.1.98</ecNumber>
    </recommendedName>
    <alternativeName>
        <fullName evidence="1">Polyprenyl p-hydroxybenzoate decarboxylase</fullName>
    </alternativeName>
</protein>
<name>UBID_SHEB8</name>
<keyword id="KW-1003">Cell membrane</keyword>
<keyword id="KW-0210">Decarboxylase</keyword>
<keyword id="KW-0285">Flavoprotein</keyword>
<keyword id="KW-0288">FMN</keyword>
<keyword id="KW-0456">Lyase</keyword>
<keyword id="KW-0464">Manganese</keyword>
<keyword id="KW-0472">Membrane</keyword>
<keyword id="KW-0479">Metal-binding</keyword>
<keyword id="KW-0831">Ubiquinone biosynthesis</keyword>
<reference key="1">
    <citation type="submission" date="2007-07" db="EMBL/GenBank/DDBJ databases">
        <title>Complete sequence of chromosome of Shewanella baltica OS185.</title>
        <authorList>
            <consortium name="US DOE Joint Genome Institute"/>
            <person name="Copeland A."/>
            <person name="Lucas S."/>
            <person name="Lapidus A."/>
            <person name="Barry K."/>
            <person name="Glavina del Rio T."/>
            <person name="Dalin E."/>
            <person name="Tice H."/>
            <person name="Pitluck S."/>
            <person name="Sims D."/>
            <person name="Brettin T."/>
            <person name="Bruce D."/>
            <person name="Detter J.C."/>
            <person name="Han C."/>
            <person name="Schmutz J."/>
            <person name="Larimer F."/>
            <person name="Land M."/>
            <person name="Hauser L."/>
            <person name="Kyrpides N."/>
            <person name="Mikhailova N."/>
            <person name="Brettar I."/>
            <person name="Rodrigues J."/>
            <person name="Konstantinidis K."/>
            <person name="Tiedje J."/>
            <person name="Richardson P."/>
        </authorList>
    </citation>
    <scope>NUCLEOTIDE SEQUENCE [LARGE SCALE GENOMIC DNA]</scope>
    <source>
        <strain>OS185</strain>
    </source>
</reference>
<evidence type="ECO:0000255" key="1">
    <source>
        <dbReference type="HAMAP-Rule" id="MF_01636"/>
    </source>
</evidence>
<dbReference type="EC" id="4.1.1.98" evidence="1"/>
<dbReference type="EMBL" id="CP000753">
    <property type="protein sequence ID" value="ABS09983.1"/>
    <property type="molecule type" value="Genomic_DNA"/>
</dbReference>
<dbReference type="RefSeq" id="WP_011845665.1">
    <property type="nucleotide sequence ID" value="NC_009665.1"/>
</dbReference>
<dbReference type="SMR" id="A6WT44"/>
<dbReference type="KEGG" id="sbm:Shew185_3859"/>
<dbReference type="HOGENOM" id="CLU_023348_4_1_6"/>
<dbReference type="UniPathway" id="UPA00232"/>
<dbReference type="GO" id="GO:0005829">
    <property type="term" value="C:cytosol"/>
    <property type="evidence" value="ECO:0007669"/>
    <property type="project" value="TreeGrafter"/>
</dbReference>
<dbReference type="GO" id="GO:0005886">
    <property type="term" value="C:plasma membrane"/>
    <property type="evidence" value="ECO:0007669"/>
    <property type="project" value="UniProtKB-SubCell"/>
</dbReference>
<dbReference type="GO" id="GO:0008694">
    <property type="term" value="F:3-octaprenyl-4-hydroxybenzoate carboxy-lyase activity"/>
    <property type="evidence" value="ECO:0007669"/>
    <property type="project" value="UniProtKB-UniRule"/>
</dbReference>
<dbReference type="GO" id="GO:0046872">
    <property type="term" value="F:metal ion binding"/>
    <property type="evidence" value="ECO:0007669"/>
    <property type="project" value="UniProtKB-KW"/>
</dbReference>
<dbReference type="GO" id="GO:0006744">
    <property type="term" value="P:ubiquinone biosynthetic process"/>
    <property type="evidence" value="ECO:0007669"/>
    <property type="project" value="UniProtKB-UniRule"/>
</dbReference>
<dbReference type="FunFam" id="1.20.5.570:FF:000001">
    <property type="entry name" value="3-octaprenyl-4-hydroxybenzoate carboxy-lyase"/>
    <property type="match status" value="1"/>
</dbReference>
<dbReference type="FunFam" id="3.40.1670.10:FF:000001">
    <property type="entry name" value="3-octaprenyl-4-hydroxybenzoate carboxy-lyase"/>
    <property type="match status" value="1"/>
</dbReference>
<dbReference type="Gene3D" id="1.20.5.570">
    <property type="entry name" value="Single helix bin"/>
    <property type="match status" value="1"/>
</dbReference>
<dbReference type="Gene3D" id="3.40.1670.10">
    <property type="entry name" value="UbiD C-terminal domain-like"/>
    <property type="match status" value="1"/>
</dbReference>
<dbReference type="HAMAP" id="MF_01636">
    <property type="entry name" value="UbiD"/>
    <property type="match status" value="1"/>
</dbReference>
<dbReference type="InterPro" id="IPR002830">
    <property type="entry name" value="UbiD"/>
</dbReference>
<dbReference type="InterPro" id="IPR049381">
    <property type="entry name" value="UbiD-like_C"/>
</dbReference>
<dbReference type="InterPro" id="IPR049383">
    <property type="entry name" value="UbiD-like_N"/>
</dbReference>
<dbReference type="InterPro" id="IPR023677">
    <property type="entry name" value="UbiD_bacteria"/>
</dbReference>
<dbReference type="InterPro" id="IPR048304">
    <property type="entry name" value="UbiD_Rift_dom"/>
</dbReference>
<dbReference type="NCBIfam" id="NF008175">
    <property type="entry name" value="PRK10922.1"/>
    <property type="match status" value="1"/>
</dbReference>
<dbReference type="NCBIfam" id="TIGR00148">
    <property type="entry name" value="UbiD family decarboxylase"/>
    <property type="match status" value="1"/>
</dbReference>
<dbReference type="PANTHER" id="PTHR30108">
    <property type="entry name" value="3-OCTAPRENYL-4-HYDROXYBENZOATE CARBOXY-LYASE-RELATED"/>
    <property type="match status" value="1"/>
</dbReference>
<dbReference type="PANTHER" id="PTHR30108:SF17">
    <property type="entry name" value="FERULIC ACID DECARBOXYLASE 1"/>
    <property type="match status" value="1"/>
</dbReference>
<dbReference type="Pfam" id="PF01977">
    <property type="entry name" value="UbiD"/>
    <property type="match status" value="1"/>
</dbReference>
<dbReference type="Pfam" id="PF20696">
    <property type="entry name" value="UbiD_C"/>
    <property type="match status" value="1"/>
</dbReference>
<dbReference type="Pfam" id="PF20695">
    <property type="entry name" value="UbiD_N"/>
    <property type="match status" value="1"/>
</dbReference>
<dbReference type="SUPFAM" id="SSF50475">
    <property type="entry name" value="FMN-binding split barrel"/>
    <property type="match status" value="1"/>
</dbReference>
<dbReference type="SUPFAM" id="SSF143968">
    <property type="entry name" value="UbiD C-terminal domain-like"/>
    <property type="match status" value="1"/>
</dbReference>
<organism>
    <name type="scientific">Shewanella baltica (strain OS185)</name>
    <dbReference type="NCBI Taxonomy" id="402882"/>
    <lineage>
        <taxon>Bacteria</taxon>
        <taxon>Pseudomonadati</taxon>
        <taxon>Pseudomonadota</taxon>
        <taxon>Gammaproteobacteria</taxon>
        <taxon>Alteromonadales</taxon>
        <taxon>Shewanellaceae</taxon>
        <taxon>Shewanella</taxon>
    </lineage>
</organism>
<accession>A6WT44</accession>
<feature type="chain" id="PRO_1000069861" description="3-octaprenyl-4-hydroxybenzoate carboxy-lyase">
    <location>
        <begin position="1"/>
        <end position="493"/>
    </location>
</feature>
<feature type="active site" description="Proton donor" evidence="1">
    <location>
        <position position="287"/>
    </location>
</feature>
<feature type="binding site" evidence="1">
    <location>
        <position position="172"/>
    </location>
    <ligand>
        <name>Mn(2+)</name>
        <dbReference type="ChEBI" id="CHEBI:29035"/>
    </ligand>
</feature>
<feature type="binding site" evidence="1">
    <location>
        <begin position="175"/>
        <end position="177"/>
    </location>
    <ligand>
        <name>prenylated FMN</name>
        <dbReference type="ChEBI" id="CHEBI:87746"/>
    </ligand>
</feature>
<feature type="binding site" evidence="1">
    <location>
        <begin position="189"/>
        <end position="191"/>
    </location>
    <ligand>
        <name>prenylated FMN</name>
        <dbReference type="ChEBI" id="CHEBI:87746"/>
    </ligand>
</feature>
<feature type="binding site" evidence="1">
    <location>
        <begin position="194"/>
        <end position="195"/>
    </location>
    <ligand>
        <name>prenylated FMN</name>
        <dbReference type="ChEBI" id="CHEBI:87746"/>
    </ligand>
</feature>
<feature type="binding site" evidence="1">
    <location>
        <position position="238"/>
    </location>
    <ligand>
        <name>Mn(2+)</name>
        <dbReference type="ChEBI" id="CHEBI:29035"/>
    </ligand>
</feature>
<proteinExistence type="inferred from homology"/>
<comment type="function">
    <text evidence="1">Catalyzes the decarboxylation of 3-octaprenyl-4-hydroxy benzoate to 2-octaprenylphenol, an intermediate step in ubiquinone biosynthesis.</text>
</comment>
<comment type="catalytic activity">
    <reaction evidence="1">
        <text>a 4-hydroxy-3-(all-trans-polyprenyl)benzoate + H(+) = a 2-(all-trans-polyprenyl)phenol + CO2</text>
        <dbReference type="Rhea" id="RHEA:41680"/>
        <dbReference type="Rhea" id="RHEA-COMP:9514"/>
        <dbReference type="Rhea" id="RHEA-COMP:9516"/>
        <dbReference type="ChEBI" id="CHEBI:1269"/>
        <dbReference type="ChEBI" id="CHEBI:15378"/>
        <dbReference type="ChEBI" id="CHEBI:16526"/>
        <dbReference type="ChEBI" id="CHEBI:78396"/>
        <dbReference type="EC" id="4.1.1.98"/>
    </reaction>
</comment>
<comment type="cofactor">
    <cofactor evidence="1">
        <name>prenylated FMN</name>
        <dbReference type="ChEBI" id="CHEBI:87746"/>
    </cofactor>
    <text evidence="1">Binds 1 prenylated FMN per subunit.</text>
</comment>
<comment type="cofactor">
    <cofactor evidence="1">
        <name>Mn(2+)</name>
        <dbReference type="ChEBI" id="CHEBI:29035"/>
    </cofactor>
</comment>
<comment type="pathway">
    <text evidence="1">Cofactor biosynthesis; ubiquinone biosynthesis.</text>
</comment>
<comment type="subunit">
    <text evidence="1">Homohexamer.</text>
</comment>
<comment type="subcellular location">
    <subcellularLocation>
        <location evidence="1">Cell membrane</location>
        <topology evidence="1">Peripheral membrane protein</topology>
    </subcellularLocation>
</comment>
<comment type="similarity">
    <text evidence="1">Belongs to the UbiD family.</text>
</comment>
<sequence>MSFKDLRSFIDHLEANGELKRISYPVDPHLEMTEIADRVLRAKGPALLFENPKDHHMPVLVNLFGTPKRVAMALGKDDPLALREVGELLAFLKEPEPPRGFKDAIAKIPMFKQALNMPPKTVRNPPCQQVIKTGDEVDLTQLPIQHCWPGDVAPLVTWGLTITKGPRKSRQNLGIYRQQLLGKNKLIMRWLSHRGGALDFADFKQQFPGERYPVVVALGADPVTILGAVTPVPDSMSEYAFAGLLRGERTEVCKALSCDLEVPATSEIILEGYIGPEELAEEGPYGDHTGYYNETDKFPVFTVTHITHRKDAIYHSTYTGRPPDEPAMLGVALNEVFVPILRKQYPEIVDFYLPPEGCSYRMAVISIRKQYPGHAKRVMMGAWSFLRQFMYTKFIVIVDEDVNCRDWQDVIWAITTRMDPKRDTVMIENTPIDYLDFASPVAGLGSKMGLDATNKWEGETNREWGTPIVMDPKVKQKIDSIWDELGIDDSPTL</sequence>